<protein>
    <recommendedName>
        <fullName>Uncharacterized protein YsdA</fullName>
    </recommendedName>
</protein>
<accession>P94519</accession>
<accession>Q795W4</accession>
<sequence>MIIAAYLVLINLCGFWVMGIDKRKAQQHKWRISEDRLWLIAIVFGALGVWLGMQTFRHKTKHASFKYGVPLLLVIEAILIAIYYSPFDL</sequence>
<gene>
    <name type="primary">ysdA</name>
    <name type="ordered locus">BSU28840</name>
</gene>
<evidence type="ECO:0000255" key="1"/>
<evidence type="ECO:0000305" key="2"/>
<proteinExistence type="predicted"/>
<comment type="subcellular location">
    <subcellularLocation>
        <location evidence="2">Cell membrane</location>
        <topology evidence="2">Multi-pass membrane protein</topology>
    </subcellularLocation>
</comment>
<feature type="chain" id="PRO_0000360606" description="Uncharacterized protein YsdA">
    <location>
        <begin position="1"/>
        <end position="89"/>
    </location>
</feature>
<feature type="transmembrane region" description="Helical" evidence="1">
    <location>
        <begin position="5"/>
        <end position="25"/>
    </location>
</feature>
<feature type="transmembrane region" description="Helical" evidence="1">
    <location>
        <begin position="36"/>
        <end position="56"/>
    </location>
</feature>
<feature type="transmembrane region" description="Helical" evidence="1">
    <location>
        <begin position="67"/>
        <end position="87"/>
    </location>
</feature>
<organism>
    <name type="scientific">Bacillus subtilis (strain 168)</name>
    <dbReference type="NCBI Taxonomy" id="224308"/>
    <lineage>
        <taxon>Bacteria</taxon>
        <taxon>Bacillati</taxon>
        <taxon>Bacillota</taxon>
        <taxon>Bacilli</taxon>
        <taxon>Bacillales</taxon>
        <taxon>Bacillaceae</taxon>
        <taxon>Bacillus</taxon>
    </lineage>
</organism>
<dbReference type="EMBL" id="Z75208">
    <property type="protein sequence ID" value="CAA99583.1"/>
    <property type="molecule type" value="Genomic_DNA"/>
</dbReference>
<dbReference type="EMBL" id="AL009126">
    <property type="protein sequence ID" value="CAB14844.1"/>
    <property type="molecule type" value="Genomic_DNA"/>
</dbReference>
<dbReference type="PIR" id="G69983">
    <property type="entry name" value="G69983"/>
</dbReference>
<dbReference type="RefSeq" id="NP_390762.1">
    <property type="nucleotide sequence ID" value="NC_000964.3"/>
</dbReference>
<dbReference type="RefSeq" id="WP_003229490.1">
    <property type="nucleotide sequence ID" value="NZ_OZ025638.1"/>
</dbReference>
<dbReference type="SMR" id="P94519"/>
<dbReference type="FunCoup" id="P94519">
    <property type="interactions" value="35"/>
</dbReference>
<dbReference type="STRING" id="224308.BSU28840"/>
<dbReference type="PaxDb" id="224308-BSU28840"/>
<dbReference type="EnsemblBacteria" id="CAB14844">
    <property type="protein sequence ID" value="CAB14844"/>
    <property type="gene ID" value="BSU_28840"/>
</dbReference>
<dbReference type="GeneID" id="937419"/>
<dbReference type="KEGG" id="bsu:BSU28840"/>
<dbReference type="PATRIC" id="fig|224308.179.peg.3132"/>
<dbReference type="eggNOG" id="COG3326">
    <property type="taxonomic scope" value="Bacteria"/>
</dbReference>
<dbReference type="InParanoid" id="P94519"/>
<dbReference type="OrthoDB" id="1698854at2"/>
<dbReference type="PhylomeDB" id="P94519"/>
<dbReference type="BioCyc" id="BSUB:BSU28840-MONOMER"/>
<dbReference type="Proteomes" id="UP000001570">
    <property type="component" value="Chromosome"/>
</dbReference>
<dbReference type="GO" id="GO:0005886">
    <property type="term" value="C:plasma membrane"/>
    <property type="evidence" value="ECO:0007669"/>
    <property type="project" value="UniProtKB-SubCell"/>
</dbReference>
<dbReference type="InterPro" id="IPR010718">
    <property type="entry name" value="DUF1294"/>
</dbReference>
<dbReference type="Pfam" id="PF06961">
    <property type="entry name" value="DUF1294"/>
    <property type="match status" value="1"/>
</dbReference>
<reference key="1">
    <citation type="journal article" date="1996" name="Microbiology">
        <title>The dnaB-pheA (256 degrees-240 degrees) region of the Bacillus subtilis chromosome containing genes responsible for stress responses, the utilization of plant cell walls and primary metabolism.</title>
        <authorList>
            <person name="Wipat A."/>
            <person name="Carter N."/>
            <person name="Brignell C.S."/>
            <person name="Guy J.B."/>
            <person name="Piper K."/>
            <person name="Sanders J."/>
            <person name="Emmerson P.T."/>
            <person name="Harwood C.R."/>
        </authorList>
    </citation>
    <scope>NUCLEOTIDE SEQUENCE [GENOMIC DNA]</scope>
    <source>
        <strain>168</strain>
    </source>
</reference>
<reference key="2">
    <citation type="journal article" date="1997" name="Nature">
        <title>The complete genome sequence of the Gram-positive bacterium Bacillus subtilis.</title>
        <authorList>
            <person name="Kunst F."/>
            <person name="Ogasawara N."/>
            <person name="Moszer I."/>
            <person name="Albertini A.M."/>
            <person name="Alloni G."/>
            <person name="Azevedo V."/>
            <person name="Bertero M.G."/>
            <person name="Bessieres P."/>
            <person name="Bolotin A."/>
            <person name="Borchert S."/>
            <person name="Borriss R."/>
            <person name="Boursier L."/>
            <person name="Brans A."/>
            <person name="Braun M."/>
            <person name="Brignell S.C."/>
            <person name="Bron S."/>
            <person name="Brouillet S."/>
            <person name="Bruschi C.V."/>
            <person name="Caldwell B."/>
            <person name="Capuano V."/>
            <person name="Carter N.M."/>
            <person name="Choi S.-K."/>
            <person name="Codani J.-J."/>
            <person name="Connerton I.F."/>
            <person name="Cummings N.J."/>
            <person name="Daniel R.A."/>
            <person name="Denizot F."/>
            <person name="Devine K.M."/>
            <person name="Duesterhoeft A."/>
            <person name="Ehrlich S.D."/>
            <person name="Emmerson P.T."/>
            <person name="Entian K.-D."/>
            <person name="Errington J."/>
            <person name="Fabret C."/>
            <person name="Ferrari E."/>
            <person name="Foulger D."/>
            <person name="Fritz C."/>
            <person name="Fujita M."/>
            <person name="Fujita Y."/>
            <person name="Fuma S."/>
            <person name="Galizzi A."/>
            <person name="Galleron N."/>
            <person name="Ghim S.-Y."/>
            <person name="Glaser P."/>
            <person name="Goffeau A."/>
            <person name="Golightly E.J."/>
            <person name="Grandi G."/>
            <person name="Guiseppi G."/>
            <person name="Guy B.J."/>
            <person name="Haga K."/>
            <person name="Haiech J."/>
            <person name="Harwood C.R."/>
            <person name="Henaut A."/>
            <person name="Hilbert H."/>
            <person name="Holsappel S."/>
            <person name="Hosono S."/>
            <person name="Hullo M.-F."/>
            <person name="Itaya M."/>
            <person name="Jones L.-M."/>
            <person name="Joris B."/>
            <person name="Karamata D."/>
            <person name="Kasahara Y."/>
            <person name="Klaerr-Blanchard M."/>
            <person name="Klein C."/>
            <person name="Kobayashi Y."/>
            <person name="Koetter P."/>
            <person name="Koningstein G."/>
            <person name="Krogh S."/>
            <person name="Kumano M."/>
            <person name="Kurita K."/>
            <person name="Lapidus A."/>
            <person name="Lardinois S."/>
            <person name="Lauber J."/>
            <person name="Lazarevic V."/>
            <person name="Lee S.-M."/>
            <person name="Levine A."/>
            <person name="Liu H."/>
            <person name="Masuda S."/>
            <person name="Mauel C."/>
            <person name="Medigue C."/>
            <person name="Medina N."/>
            <person name="Mellado R.P."/>
            <person name="Mizuno M."/>
            <person name="Moestl D."/>
            <person name="Nakai S."/>
            <person name="Noback M."/>
            <person name="Noone D."/>
            <person name="O'Reilly M."/>
            <person name="Ogawa K."/>
            <person name="Ogiwara A."/>
            <person name="Oudega B."/>
            <person name="Park S.-H."/>
            <person name="Parro V."/>
            <person name="Pohl T.M."/>
            <person name="Portetelle D."/>
            <person name="Porwollik S."/>
            <person name="Prescott A.M."/>
            <person name="Presecan E."/>
            <person name="Pujic P."/>
            <person name="Purnelle B."/>
            <person name="Rapoport G."/>
            <person name="Rey M."/>
            <person name="Reynolds S."/>
            <person name="Rieger M."/>
            <person name="Rivolta C."/>
            <person name="Rocha E."/>
            <person name="Roche B."/>
            <person name="Rose M."/>
            <person name="Sadaie Y."/>
            <person name="Sato T."/>
            <person name="Scanlan E."/>
            <person name="Schleich S."/>
            <person name="Schroeter R."/>
            <person name="Scoffone F."/>
            <person name="Sekiguchi J."/>
            <person name="Sekowska A."/>
            <person name="Seror S.J."/>
            <person name="Serror P."/>
            <person name="Shin B.-S."/>
            <person name="Soldo B."/>
            <person name="Sorokin A."/>
            <person name="Tacconi E."/>
            <person name="Takagi T."/>
            <person name="Takahashi H."/>
            <person name="Takemaru K."/>
            <person name="Takeuchi M."/>
            <person name="Tamakoshi A."/>
            <person name="Tanaka T."/>
            <person name="Terpstra P."/>
            <person name="Tognoni A."/>
            <person name="Tosato V."/>
            <person name="Uchiyama S."/>
            <person name="Vandenbol M."/>
            <person name="Vannier F."/>
            <person name="Vassarotti A."/>
            <person name="Viari A."/>
            <person name="Wambutt R."/>
            <person name="Wedler E."/>
            <person name="Wedler H."/>
            <person name="Weitzenegger T."/>
            <person name="Winters P."/>
            <person name="Wipat A."/>
            <person name="Yamamoto H."/>
            <person name="Yamane K."/>
            <person name="Yasumoto K."/>
            <person name="Yata K."/>
            <person name="Yoshida K."/>
            <person name="Yoshikawa H.-F."/>
            <person name="Zumstein E."/>
            <person name="Yoshikawa H."/>
            <person name="Danchin A."/>
        </authorList>
    </citation>
    <scope>NUCLEOTIDE SEQUENCE [LARGE SCALE GENOMIC DNA]</scope>
    <source>
        <strain>168</strain>
    </source>
</reference>
<keyword id="KW-1003">Cell membrane</keyword>
<keyword id="KW-0472">Membrane</keyword>
<keyword id="KW-1185">Reference proteome</keyword>
<keyword id="KW-0812">Transmembrane</keyword>
<keyword id="KW-1133">Transmembrane helix</keyword>
<name>YSDA_BACSU</name>